<accession>Q03PV3</accession>
<organism>
    <name type="scientific">Levilactobacillus brevis (strain ATCC 367 / BCRC 12310 / CIP 105137 / JCM 1170 / LMG 11437 / NCIMB 947 / NCTC 947)</name>
    <name type="common">Lactobacillus brevis</name>
    <dbReference type="NCBI Taxonomy" id="387344"/>
    <lineage>
        <taxon>Bacteria</taxon>
        <taxon>Bacillati</taxon>
        <taxon>Bacillota</taxon>
        <taxon>Bacilli</taxon>
        <taxon>Lactobacillales</taxon>
        <taxon>Lactobacillaceae</taxon>
        <taxon>Levilactobacillus</taxon>
    </lineage>
</organism>
<name>RS7_LEVBA</name>
<comment type="function">
    <text evidence="1">One of the primary rRNA binding proteins, it binds directly to 16S rRNA where it nucleates assembly of the head domain of the 30S subunit. Is located at the subunit interface close to the decoding center, probably blocks exit of the E-site tRNA.</text>
</comment>
<comment type="subunit">
    <text evidence="1">Part of the 30S ribosomal subunit. Contacts proteins S9 and S11.</text>
</comment>
<comment type="similarity">
    <text evidence="1">Belongs to the universal ribosomal protein uS7 family.</text>
</comment>
<protein>
    <recommendedName>
        <fullName evidence="1">Small ribosomal subunit protein uS7</fullName>
    </recommendedName>
    <alternativeName>
        <fullName evidence="2">30S ribosomal protein S7</fullName>
    </alternativeName>
</protein>
<dbReference type="EMBL" id="CP000416">
    <property type="protein sequence ID" value="ABJ64769.1"/>
    <property type="molecule type" value="Genomic_DNA"/>
</dbReference>
<dbReference type="RefSeq" id="WP_011668503.1">
    <property type="nucleotide sequence ID" value="NC_008497.1"/>
</dbReference>
<dbReference type="SMR" id="Q03PV3"/>
<dbReference type="STRING" id="387344.LVIS_1694"/>
<dbReference type="KEGG" id="lbr:LVIS_1694"/>
<dbReference type="eggNOG" id="COG0049">
    <property type="taxonomic scope" value="Bacteria"/>
</dbReference>
<dbReference type="HOGENOM" id="CLU_072226_1_1_9"/>
<dbReference type="Proteomes" id="UP000001652">
    <property type="component" value="Chromosome"/>
</dbReference>
<dbReference type="GO" id="GO:0015935">
    <property type="term" value="C:small ribosomal subunit"/>
    <property type="evidence" value="ECO:0007669"/>
    <property type="project" value="InterPro"/>
</dbReference>
<dbReference type="GO" id="GO:0019843">
    <property type="term" value="F:rRNA binding"/>
    <property type="evidence" value="ECO:0007669"/>
    <property type="project" value="UniProtKB-UniRule"/>
</dbReference>
<dbReference type="GO" id="GO:0003735">
    <property type="term" value="F:structural constituent of ribosome"/>
    <property type="evidence" value="ECO:0007669"/>
    <property type="project" value="InterPro"/>
</dbReference>
<dbReference type="GO" id="GO:0000049">
    <property type="term" value="F:tRNA binding"/>
    <property type="evidence" value="ECO:0007669"/>
    <property type="project" value="UniProtKB-UniRule"/>
</dbReference>
<dbReference type="GO" id="GO:0006412">
    <property type="term" value="P:translation"/>
    <property type="evidence" value="ECO:0007669"/>
    <property type="project" value="UniProtKB-UniRule"/>
</dbReference>
<dbReference type="CDD" id="cd14869">
    <property type="entry name" value="uS7_Bacteria"/>
    <property type="match status" value="1"/>
</dbReference>
<dbReference type="FunFam" id="1.10.455.10:FF:000001">
    <property type="entry name" value="30S ribosomal protein S7"/>
    <property type="match status" value="1"/>
</dbReference>
<dbReference type="Gene3D" id="1.10.455.10">
    <property type="entry name" value="Ribosomal protein S7 domain"/>
    <property type="match status" value="1"/>
</dbReference>
<dbReference type="HAMAP" id="MF_00480_B">
    <property type="entry name" value="Ribosomal_uS7_B"/>
    <property type="match status" value="1"/>
</dbReference>
<dbReference type="InterPro" id="IPR000235">
    <property type="entry name" value="Ribosomal_uS7"/>
</dbReference>
<dbReference type="InterPro" id="IPR005717">
    <property type="entry name" value="Ribosomal_uS7_bac/org-type"/>
</dbReference>
<dbReference type="InterPro" id="IPR020606">
    <property type="entry name" value="Ribosomal_uS7_CS"/>
</dbReference>
<dbReference type="InterPro" id="IPR023798">
    <property type="entry name" value="Ribosomal_uS7_dom"/>
</dbReference>
<dbReference type="InterPro" id="IPR036823">
    <property type="entry name" value="Ribosomal_uS7_dom_sf"/>
</dbReference>
<dbReference type="NCBIfam" id="TIGR01029">
    <property type="entry name" value="rpsG_bact"/>
    <property type="match status" value="1"/>
</dbReference>
<dbReference type="PANTHER" id="PTHR11205">
    <property type="entry name" value="RIBOSOMAL PROTEIN S7"/>
    <property type="match status" value="1"/>
</dbReference>
<dbReference type="Pfam" id="PF00177">
    <property type="entry name" value="Ribosomal_S7"/>
    <property type="match status" value="1"/>
</dbReference>
<dbReference type="PIRSF" id="PIRSF002122">
    <property type="entry name" value="RPS7p_RPS7a_RPS5e_RPS7o"/>
    <property type="match status" value="1"/>
</dbReference>
<dbReference type="SUPFAM" id="SSF47973">
    <property type="entry name" value="Ribosomal protein S7"/>
    <property type="match status" value="1"/>
</dbReference>
<dbReference type="PROSITE" id="PS00052">
    <property type="entry name" value="RIBOSOMAL_S7"/>
    <property type="match status" value="1"/>
</dbReference>
<sequence length="156" mass="18026">MPRKGNVQKREVLPDPIYNSKLVTRLINHMMMDGKRGTSTKIIYGAFDIIKNETGNDPVETFEEAMKNIMPVLEVKARRVGGSNYQVPIEVRPDRRTTLGLRWLVQYSRLRGEHTMVERLAREIMDAANNTGAAVKKREDTHRMADANRAFAHYRW</sequence>
<keyword id="KW-1185">Reference proteome</keyword>
<keyword id="KW-0687">Ribonucleoprotein</keyword>
<keyword id="KW-0689">Ribosomal protein</keyword>
<keyword id="KW-0694">RNA-binding</keyword>
<keyword id="KW-0699">rRNA-binding</keyword>
<keyword id="KW-0820">tRNA-binding</keyword>
<gene>
    <name evidence="1" type="primary">rpsG</name>
    <name type="ordered locus">LVIS_1694</name>
</gene>
<proteinExistence type="inferred from homology"/>
<evidence type="ECO:0000255" key="1">
    <source>
        <dbReference type="HAMAP-Rule" id="MF_00480"/>
    </source>
</evidence>
<evidence type="ECO:0000305" key="2"/>
<reference key="1">
    <citation type="journal article" date="2006" name="Proc. Natl. Acad. Sci. U.S.A.">
        <title>Comparative genomics of the lactic acid bacteria.</title>
        <authorList>
            <person name="Makarova K.S."/>
            <person name="Slesarev A."/>
            <person name="Wolf Y.I."/>
            <person name="Sorokin A."/>
            <person name="Mirkin B."/>
            <person name="Koonin E.V."/>
            <person name="Pavlov A."/>
            <person name="Pavlova N."/>
            <person name="Karamychev V."/>
            <person name="Polouchine N."/>
            <person name="Shakhova V."/>
            <person name="Grigoriev I."/>
            <person name="Lou Y."/>
            <person name="Rohksar D."/>
            <person name="Lucas S."/>
            <person name="Huang K."/>
            <person name="Goodstein D.M."/>
            <person name="Hawkins T."/>
            <person name="Plengvidhya V."/>
            <person name="Welker D."/>
            <person name="Hughes J."/>
            <person name="Goh Y."/>
            <person name="Benson A."/>
            <person name="Baldwin K."/>
            <person name="Lee J.-H."/>
            <person name="Diaz-Muniz I."/>
            <person name="Dosti B."/>
            <person name="Smeianov V."/>
            <person name="Wechter W."/>
            <person name="Barabote R."/>
            <person name="Lorca G."/>
            <person name="Altermann E."/>
            <person name="Barrangou R."/>
            <person name="Ganesan B."/>
            <person name="Xie Y."/>
            <person name="Rawsthorne H."/>
            <person name="Tamir D."/>
            <person name="Parker C."/>
            <person name="Breidt F."/>
            <person name="Broadbent J.R."/>
            <person name="Hutkins R."/>
            <person name="O'Sullivan D."/>
            <person name="Steele J."/>
            <person name="Unlu G."/>
            <person name="Saier M.H. Jr."/>
            <person name="Klaenhammer T."/>
            <person name="Richardson P."/>
            <person name="Kozyavkin S."/>
            <person name="Weimer B.C."/>
            <person name="Mills D.A."/>
        </authorList>
    </citation>
    <scope>NUCLEOTIDE SEQUENCE [LARGE SCALE GENOMIC DNA]</scope>
    <source>
        <strain>ATCC 367 / BCRC 12310 / CIP 105137 / JCM 1170 / LMG 11437 / NCIMB 947 / NCTC 947</strain>
    </source>
</reference>
<feature type="chain" id="PRO_1000014210" description="Small ribosomal subunit protein uS7">
    <location>
        <begin position="1"/>
        <end position="156"/>
    </location>
</feature>